<dbReference type="EMBL" id="CP001120">
    <property type="protein sequence ID" value="ACF67380.1"/>
    <property type="molecule type" value="Genomic_DNA"/>
</dbReference>
<dbReference type="RefSeq" id="WP_000872918.1">
    <property type="nucleotide sequence ID" value="NC_011083.1"/>
</dbReference>
<dbReference type="SMR" id="B4TCM6"/>
<dbReference type="KEGG" id="seh:SeHA_C4421"/>
<dbReference type="HOGENOM" id="CLU_072626_4_0_6"/>
<dbReference type="Proteomes" id="UP000001866">
    <property type="component" value="Chromosome"/>
</dbReference>
<dbReference type="GO" id="GO:0005829">
    <property type="term" value="C:cytosol"/>
    <property type="evidence" value="ECO:0007669"/>
    <property type="project" value="TreeGrafter"/>
</dbReference>
<dbReference type="GO" id="GO:0060698">
    <property type="term" value="F:endoribonuclease inhibitor activity"/>
    <property type="evidence" value="ECO:0007669"/>
    <property type="project" value="UniProtKB-UniRule"/>
</dbReference>
<dbReference type="GO" id="GO:0019899">
    <property type="term" value="F:enzyme binding"/>
    <property type="evidence" value="ECO:0007669"/>
    <property type="project" value="UniProtKB-UniRule"/>
</dbReference>
<dbReference type="GO" id="GO:1902369">
    <property type="term" value="P:negative regulation of RNA catabolic process"/>
    <property type="evidence" value="ECO:0007669"/>
    <property type="project" value="TreeGrafter"/>
</dbReference>
<dbReference type="CDD" id="cd16841">
    <property type="entry name" value="RraA_family"/>
    <property type="match status" value="1"/>
</dbReference>
<dbReference type="FunFam" id="3.50.30.40:FF:000001">
    <property type="entry name" value="Regulator of ribonuclease activity A"/>
    <property type="match status" value="1"/>
</dbReference>
<dbReference type="Gene3D" id="3.50.30.40">
    <property type="entry name" value="Ribonuclease E inhibitor RraA/RraA-like"/>
    <property type="match status" value="1"/>
</dbReference>
<dbReference type="HAMAP" id="MF_00471">
    <property type="entry name" value="RraA"/>
    <property type="match status" value="1"/>
</dbReference>
<dbReference type="InterPro" id="IPR010203">
    <property type="entry name" value="RraA"/>
</dbReference>
<dbReference type="InterPro" id="IPR005493">
    <property type="entry name" value="RraA/RraA-like"/>
</dbReference>
<dbReference type="InterPro" id="IPR036704">
    <property type="entry name" value="RraA/RraA-like_sf"/>
</dbReference>
<dbReference type="InterPro" id="IPR014339">
    <property type="entry name" value="RraA_gpbac"/>
</dbReference>
<dbReference type="NCBIfam" id="TIGR01935">
    <property type="entry name" value="NOT-MenG"/>
    <property type="match status" value="1"/>
</dbReference>
<dbReference type="NCBIfam" id="NF006875">
    <property type="entry name" value="PRK09372.1"/>
    <property type="match status" value="1"/>
</dbReference>
<dbReference type="NCBIfam" id="TIGR02998">
    <property type="entry name" value="RraA_entero"/>
    <property type="match status" value="1"/>
</dbReference>
<dbReference type="PANTHER" id="PTHR33254">
    <property type="entry name" value="4-HYDROXY-4-METHYL-2-OXOGLUTARATE ALDOLASE 3-RELATED"/>
    <property type="match status" value="1"/>
</dbReference>
<dbReference type="PANTHER" id="PTHR33254:SF29">
    <property type="entry name" value="REGULATOR OF RIBONUCLEASE ACTIVITY A"/>
    <property type="match status" value="1"/>
</dbReference>
<dbReference type="Pfam" id="PF03737">
    <property type="entry name" value="RraA-like"/>
    <property type="match status" value="1"/>
</dbReference>
<dbReference type="SUPFAM" id="SSF89562">
    <property type="entry name" value="RraA-like"/>
    <property type="match status" value="1"/>
</dbReference>
<feature type="chain" id="PRO_1000194875" description="Regulator of ribonuclease activity A">
    <location>
        <begin position="1"/>
        <end position="161"/>
    </location>
</feature>
<reference key="1">
    <citation type="journal article" date="2011" name="J. Bacteriol.">
        <title>Comparative genomics of 28 Salmonella enterica isolates: evidence for CRISPR-mediated adaptive sublineage evolution.</title>
        <authorList>
            <person name="Fricke W.F."/>
            <person name="Mammel M.K."/>
            <person name="McDermott P.F."/>
            <person name="Tartera C."/>
            <person name="White D.G."/>
            <person name="Leclerc J.E."/>
            <person name="Ravel J."/>
            <person name="Cebula T.A."/>
        </authorList>
    </citation>
    <scope>NUCLEOTIDE SEQUENCE [LARGE SCALE GENOMIC DNA]</scope>
    <source>
        <strain>SL476</strain>
    </source>
</reference>
<accession>B4TCM6</accession>
<gene>
    <name evidence="1" type="primary">rraA</name>
    <name type="ordered locus">SeHA_C4421</name>
</gene>
<sequence length="161" mass="17374">MKYDTSELCDIYQEDVNVVEPLFSNFGGRSSFGGQIITVKCFEDNGLLYDLLEQNGRGRVLLVDGGGSVRRALVDAELARLATQNEWEGLVIYGAVRQVDDLEELDIGIQAIAAIPVGAAGEGIGESDVRVNFGGVTFFSGDHLYADNTGIILSEDPLDIE</sequence>
<protein>
    <recommendedName>
        <fullName evidence="1">Regulator of ribonuclease activity A</fullName>
    </recommendedName>
</protein>
<comment type="function">
    <text evidence="1">Globally modulates RNA abundance by binding to RNase E (Rne) and regulating its endonucleolytic activity. Can modulate Rne action in a substrate-dependent manner by altering the composition of the degradosome. Modulates RNA-binding and helicase activities of the degradosome.</text>
</comment>
<comment type="subunit">
    <text evidence="1">Homotrimer. Binds to both RNA-binding sites in the C-terminal region of Rne and to RhlB.</text>
</comment>
<comment type="subcellular location">
    <subcellularLocation>
        <location evidence="1">Cytoplasm</location>
    </subcellularLocation>
</comment>
<comment type="similarity">
    <text evidence="1">Belongs to the RraA family.</text>
</comment>
<name>RRAA_SALHS</name>
<proteinExistence type="inferred from homology"/>
<keyword id="KW-0963">Cytoplasm</keyword>
<evidence type="ECO:0000255" key="1">
    <source>
        <dbReference type="HAMAP-Rule" id="MF_00471"/>
    </source>
</evidence>
<organism>
    <name type="scientific">Salmonella heidelberg (strain SL476)</name>
    <dbReference type="NCBI Taxonomy" id="454169"/>
    <lineage>
        <taxon>Bacteria</taxon>
        <taxon>Pseudomonadati</taxon>
        <taxon>Pseudomonadota</taxon>
        <taxon>Gammaproteobacteria</taxon>
        <taxon>Enterobacterales</taxon>
        <taxon>Enterobacteriaceae</taxon>
        <taxon>Salmonella</taxon>
    </lineage>
</organism>